<comment type="subunit">
    <text evidence="1">Part of the 50S ribosomal subunit.</text>
</comment>
<comment type="similarity">
    <text evidence="1">Belongs to the universal ribosomal protein uL30 family.</text>
</comment>
<evidence type="ECO:0000255" key="1">
    <source>
        <dbReference type="HAMAP-Rule" id="MF_01371"/>
    </source>
</evidence>
<evidence type="ECO:0000305" key="2"/>
<proteinExistence type="inferred from homology"/>
<protein>
    <recommendedName>
        <fullName evidence="1">Large ribosomal subunit protein uL30</fullName>
    </recommendedName>
    <alternativeName>
        <fullName evidence="2">50S ribosomal protein L30</fullName>
    </alternativeName>
</protein>
<name>RL30_COXBR</name>
<dbReference type="EMBL" id="CP000890">
    <property type="protein sequence ID" value="ABX78660.1"/>
    <property type="molecule type" value="Genomic_DNA"/>
</dbReference>
<dbReference type="RefSeq" id="WP_005771513.1">
    <property type="nucleotide sequence ID" value="NC_010117.1"/>
</dbReference>
<dbReference type="SMR" id="A9NAY8"/>
<dbReference type="KEGG" id="cbs:COXBURSA331_A0355"/>
<dbReference type="HOGENOM" id="CLU_131047_1_4_6"/>
<dbReference type="GO" id="GO:0022625">
    <property type="term" value="C:cytosolic large ribosomal subunit"/>
    <property type="evidence" value="ECO:0007669"/>
    <property type="project" value="TreeGrafter"/>
</dbReference>
<dbReference type="GO" id="GO:0003735">
    <property type="term" value="F:structural constituent of ribosome"/>
    <property type="evidence" value="ECO:0007669"/>
    <property type="project" value="InterPro"/>
</dbReference>
<dbReference type="GO" id="GO:0006412">
    <property type="term" value="P:translation"/>
    <property type="evidence" value="ECO:0007669"/>
    <property type="project" value="UniProtKB-UniRule"/>
</dbReference>
<dbReference type="CDD" id="cd01658">
    <property type="entry name" value="Ribosomal_L30"/>
    <property type="match status" value="1"/>
</dbReference>
<dbReference type="FunFam" id="3.30.1390.20:FF:000001">
    <property type="entry name" value="50S ribosomal protein L30"/>
    <property type="match status" value="1"/>
</dbReference>
<dbReference type="Gene3D" id="3.30.1390.20">
    <property type="entry name" value="Ribosomal protein L30, ferredoxin-like fold domain"/>
    <property type="match status" value="1"/>
</dbReference>
<dbReference type="HAMAP" id="MF_01371_B">
    <property type="entry name" value="Ribosomal_uL30_B"/>
    <property type="match status" value="1"/>
</dbReference>
<dbReference type="InterPro" id="IPR036919">
    <property type="entry name" value="Ribo_uL30_ferredoxin-like_sf"/>
</dbReference>
<dbReference type="InterPro" id="IPR005996">
    <property type="entry name" value="Ribosomal_uL30_bac-type"/>
</dbReference>
<dbReference type="InterPro" id="IPR016082">
    <property type="entry name" value="Ribosomal_uL30_ferredoxin-like"/>
</dbReference>
<dbReference type="NCBIfam" id="TIGR01308">
    <property type="entry name" value="rpmD_bact"/>
    <property type="match status" value="1"/>
</dbReference>
<dbReference type="PANTHER" id="PTHR15892:SF2">
    <property type="entry name" value="LARGE RIBOSOMAL SUBUNIT PROTEIN UL30M"/>
    <property type="match status" value="1"/>
</dbReference>
<dbReference type="PANTHER" id="PTHR15892">
    <property type="entry name" value="MITOCHONDRIAL RIBOSOMAL PROTEIN L30"/>
    <property type="match status" value="1"/>
</dbReference>
<dbReference type="Pfam" id="PF00327">
    <property type="entry name" value="Ribosomal_L30"/>
    <property type="match status" value="1"/>
</dbReference>
<dbReference type="PIRSF" id="PIRSF002211">
    <property type="entry name" value="Ribosomal_L30_bac-type"/>
    <property type="match status" value="1"/>
</dbReference>
<dbReference type="SUPFAM" id="SSF55129">
    <property type="entry name" value="Ribosomal protein L30p/L7e"/>
    <property type="match status" value="1"/>
</dbReference>
<accession>A9NAY8</accession>
<sequence length="63" mass="7299">MVQEKKLRVTLVKSKYGRKPGHRECIEGLGLRRMHQTVEVTDTPANRGMIEKVSYLLMIDEEV</sequence>
<reference key="1">
    <citation type="submission" date="2007-11" db="EMBL/GenBank/DDBJ databases">
        <title>Genome sequencing of phylogenetically and phenotypically diverse Coxiella burnetii isolates.</title>
        <authorList>
            <person name="Seshadri R."/>
            <person name="Samuel J.E."/>
        </authorList>
    </citation>
    <scope>NUCLEOTIDE SEQUENCE [LARGE SCALE GENOMIC DNA]</scope>
    <source>
        <strain>RSA 331 / Henzerling II</strain>
    </source>
</reference>
<organism>
    <name type="scientific">Coxiella burnetii (strain RSA 331 / Henzerling II)</name>
    <dbReference type="NCBI Taxonomy" id="360115"/>
    <lineage>
        <taxon>Bacteria</taxon>
        <taxon>Pseudomonadati</taxon>
        <taxon>Pseudomonadota</taxon>
        <taxon>Gammaproteobacteria</taxon>
        <taxon>Legionellales</taxon>
        <taxon>Coxiellaceae</taxon>
        <taxon>Coxiella</taxon>
    </lineage>
</organism>
<feature type="chain" id="PRO_1000087247" description="Large ribosomal subunit protein uL30">
    <location>
        <begin position="1"/>
        <end position="63"/>
    </location>
</feature>
<keyword id="KW-0687">Ribonucleoprotein</keyword>
<keyword id="KW-0689">Ribosomal protein</keyword>
<gene>
    <name evidence="1" type="primary">rpmD</name>
    <name type="ordered locus">COXBURSA331_A0355</name>
</gene>